<reference key="1">
    <citation type="journal article" date="2003" name="Nature">
        <title>Genome divergence in two Prochlorococcus ecotypes reflects oceanic niche differentiation.</title>
        <authorList>
            <person name="Rocap G."/>
            <person name="Larimer F.W."/>
            <person name="Lamerdin J.E."/>
            <person name="Malfatti S."/>
            <person name="Chain P."/>
            <person name="Ahlgren N.A."/>
            <person name="Arellano A."/>
            <person name="Coleman M."/>
            <person name="Hauser L."/>
            <person name="Hess W.R."/>
            <person name="Johnson Z.I."/>
            <person name="Land M.L."/>
            <person name="Lindell D."/>
            <person name="Post A.F."/>
            <person name="Regala W."/>
            <person name="Shah M."/>
            <person name="Shaw S.L."/>
            <person name="Steglich C."/>
            <person name="Sullivan M.B."/>
            <person name="Ting C.S."/>
            <person name="Tolonen A."/>
            <person name="Webb E.A."/>
            <person name="Zinser E.R."/>
            <person name="Chisholm S.W."/>
        </authorList>
    </citation>
    <scope>NUCLEOTIDE SEQUENCE [LARGE SCALE GENOMIC DNA]</scope>
    <source>
        <strain>CCMP1986 / NIES-2087 / MED4</strain>
    </source>
</reference>
<proteinExistence type="inferred from homology"/>
<comment type="function">
    <text evidence="2">Produces ATP from ADP in the presence of a proton gradient across the membrane. The alpha chain is a regulatory subunit.</text>
</comment>
<comment type="catalytic activity">
    <reaction evidence="2">
        <text>ATP + H2O + 4 H(+)(in) = ADP + phosphate + 5 H(+)(out)</text>
        <dbReference type="Rhea" id="RHEA:57720"/>
        <dbReference type="ChEBI" id="CHEBI:15377"/>
        <dbReference type="ChEBI" id="CHEBI:15378"/>
        <dbReference type="ChEBI" id="CHEBI:30616"/>
        <dbReference type="ChEBI" id="CHEBI:43474"/>
        <dbReference type="ChEBI" id="CHEBI:456216"/>
        <dbReference type="EC" id="7.1.2.2"/>
    </reaction>
</comment>
<comment type="subunit">
    <text evidence="1">F-type ATPases have 2 components, CF(1) - the catalytic core - and CF(0) - the membrane proton channel. CF(1) has five subunits: alpha(3), beta(3), gamma(1), delta(1), epsilon(1). CF(0) has four main subunits: a(1), b(1), b'(1) and c(9-12) (By similarity).</text>
</comment>
<comment type="subcellular location">
    <subcellularLocation>
        <location evidence="2">Cellular thylakoid membrane</location>
        <topology evidence="2">Peripheral membrane protein</topology>
    </subcellularLocation>
</comment>
<comment type="similarity">
    <text evidence="2">Belongs to the ATPase alpha/beta chains family.</text>
</comment>
<feature type="chain" id="PRO_0000238324" description="ATP synthase subunit alpha">
    <location>
        <begin position="1"/>
        <end position="505"/>
    </location>
</feature>
<feature type="binding site" evidence="2">
    <location>
        <begin position="170"/>
        <end position="177"/>
    </location>
    <ligand>
        <name>ATP</name>
        <dbReference type="ChEBI" id="CHEBI:30616"/>
    </ligand>
</feature>
<feature type="site" description="Required for activity" evidence="2">
    <location>
        <position position="363"/>
    </location>
</feature>
<dbReference type="EC" id="7.1.2.2" evidence="2"/>
<dbReference type="EMBL" id="BX548174">
    <property type="protein sequence ID" value="CAE19910.1"/>
    <property type="molecule type" value="Genomic_DNA"/>
</dbReference>
<dbReference type="RefSeq" id="WP_011133080.1">
    <property type="nucleotide sequence ID" value="NC_005072.1"/>
</dbReference>
<dbReference type="SMR" id="Q7V037"/>
<dbReference type="STRING" id="59919.PMM1451"/>
<dbReference type="KEGG" id="pmm:PMM1451"/>
<dbReference type="eggNOG" id="COG0056">
    <property type="taxonomic scope" value="Bacteria"/>
</dbReference>
<dbReference type="HOGENOM" id="CLU_010091_2_1_3"/>
<dbReference type="OrthoDB" id="9803053at2"/>
<dbReference type="Proteomes" id="UP000001026">
    <property type="component" value="Chromosome"/>
</dbReference>
<dbReference type="GO" id="GO:0031676">
    <property type="term" value="C:plasma membrane-derived thylakoid membrane"/>
    <property type="evidence" value="ECO:0007669"/>
    <property type="project" value="UniProtKB-SubCell"/>
</dbReference>
<dbReference type="GO" id="GO:0045259">
    <property type="term" value="C:proton-transporting ATP synthase complex"/>
    <property type="evidence" value="ECO:0007669"/>
    <property type="project" value="UniProtKB-KW"/>
</dbReference>
<dbReference type="GO" id="GO:0043531">
    <property type="term" value="F:ADP binding"/>
    <property type="evidence" value="ECO:0007669"/>
    <property type="project" value="TreeGrafter"/>
</dbReference>
<dbReference type="GO" id="GO:0005524">
    <property type="term" value="F:ATP binding"/>
    <property type="evidence" value="ECO:0007669"/>
    <property type="project" value="UniProtKB-UniRule"/>
</dbReference>
<dbReference type="GO" id="GO:0046933">
    <property type="term" value="F:proton-transporting ATP synthase activity, rotational mechanism"/>
    <property type="evidence" value="ECO:0007669"/>
    <property type="project" value="UniProtKB-UniRule"/>
</dbReference>
<dbReference type="CDD" id="cd18113">
    <property type="entry name" value="ATP-synt_F1_alpha_C"/>
    <property type="match status" value="1"/>
</dbReference>
<dbReference type="CDD" id="cd18116">
    <property type="entry name" value="ATP-synt_F1_alpha_N"/>
    <property type="match status" value="1"/>
</dbReference>
<dbReference type="CDD" id="cd01132">
    <property type="entry name" value="F1-ATPase_alpha_CD"/>
    <property type="match status" value="1"/>
</dbReference>
<dbReference type="FunFam" id="1.20.150.20:FF:000001">
    <property type="entry name" value="ATP synthase subunit alpha"/>
    <property type="match status" value="1"/>
</dbReference>
<dbReference type="FunFam" id="2.40.30.20:FF:000001">
    <property type="entry name" value="ATP synthase subunit alpha"/>
    <property type="match status" value="1"/>
</dbReference>
<dbReference type="FunFam" id="3.40.50.300:FF:000002">
    <property type="entry name" value="ATP synthase subunit alpha"/>
    <property type="match status" value="1"/>
</dbReference>
<dbReference type="Gene3D" id="2.40.30.20">
    <property type="match status" value="1"/>
</dbReference>
<dbReference type="Gene3D" id="1.20.150.20">
    <property type="entry name" value="ATP synthase alpha/beta chain, C-terminal domain"/>
    <property type="match status" value="1"/>
</dbReference>
<dbReference type="Gene3D" id="3.40.50.300">
    <property type="entry name" value="P-loop containing nucleotide triphosphate hydrolases"/>
    <property type="match status" value="1"/>
</dbReference>
<dbReference type="HAMAP" id="MF_01346">
    <property type="entry name" value="ATP_synth_alpha_bact"/>
    <property type="match status" value="1"/>
</dbReference>
<dbReference type="InterPro" id="IPR023366">
    <property type="entry name" value="ATP_synth_asu-like_sf"/>
</dbReference>
<dbReference type="InterPro" id="IPR000793">
    <property type="entry name" value="ATP_synth_asu_C"/>
</dbReference>
<dbReference type="InterPro" id="IPR038376">
    <property type="entry name" value="ATP_synth_asu_C_sf"/>
</dbReference>
<dbReference type="InterPro" id="IPR033732">
    <property type="entry name" value="ATP_synth_F1_a_nt-bd_dom"/>
</dbReference>
<dbReference type="InterPro" id="IPR005294">
    <property type="entry name" value="ATP_synth_F1_asu"/>
</dbReference>
<dbReference type="InterPro" id="IPR020003">
    <property type="entry name" value="ATPase_a/bsu_AS"/>
</dbReference>
<dbReference type="InterPro" id="IPR004100">
    <property type="entry name" value="ATPase_F1/V1/A1_a/bsu_N"/>
</dbReference>
<dbReference type="InterPro" id="IPR036121">
    <property type="entry name" value="ATPase_F1/V1/A1_a/bsu_N_sf"/>
</dbReference>
<dbReference type="InterPro" id="IPR000194">
    <property type="entry name" value="ATPase_F1/V1/A1_a/bsu_nucl-bd"/>
</dbReference>
<dbReference type="InterPro" id="IPR027417">
    <property type="entry name" value="P-loop_NTPase"/>
</dbReference>
<dbReference type="NCBIfam" id="TIGR00962">
    <property type="entry name" value="atpA"/>
    <property type="match status" value="1"/>
</dbReference>
<dbReference type="NCBIfam" id="NF009884">
    <property type="entry name" value="PRK13343.1"/>
    <property type="match status" value="1"/>
</dbReference>
<dbReference type="PANTHER" id="PTHR48082">
    <property type="entry name" value="ATP SYNTHASE SUBUNIT ALPHA, MITOCHONDRIAL"/>
    <property type="match status" value="1"/>
</dbReference>
<dbReference type="PANTHER" id="PTHR48082:SF2">
    <property type="entry name" value="ATP SYNTHASE SUBUNIT ALPHA, MITOCHONDRIAL"/>
    <property type="match status" value="1"/>
</dbReference>
<dbReference type="Pfam" id="PF00006">
    <property type="entry name" value="ATP-synt_ab"/>
    <property type="match status" value="1"/>
</dbReference>
<dbReference type="Pfam" id="PF00306">
    <property type="entry name" value="ATP-synt_ab_C"/>
    <property type="match status" value="1"/>
</dbReference>
<dbReference type="Pfam" id="PF02874">
    <property type="entry name" value="ATP-synt_ab_N"/>
    <property type="match status" value="1"/>
</dbReference>
<dbReference type="PIRSF" id="PIRSF039088">
    <property type="entry name" value="F_ATPase_subunit_alpha"/>
    <property type="match status" value="1"/>
</dbReference>
<dbReference type="SUPFAM" id="SSF47917">
    <property type="entry name" value="C-terminal domain of alpha and beta subunits of F1 ATP synthase"/>
    <property type="match status" value="1"/>
</dbReference>
<dbReference type="SUPFAM" id="SSF50615">
    <property type="entry name" value="N-terminal domain of alpha and beta subunits of F1 ATP synthase"/>
    <property type="match status" value="1"/>
</dbReference>
<dbReference type="SUPFAM" id="SSF52540">
    <property type="entry name" value="P-loop containing nucleoside triphosphate hydrolases"/>
    <property type="match status" value="1"/>
</dbReference>
<dbReference type="PROSITE" id="PS00152">
    <property type="entry name" value="ATPASE_ALPHA_BETA"/>
    <property type="match status" value="1"/>
</dbReference>
<accession>Q7V037</accession>
<gene>
    <name evidence="2" type="primary">atpA</name>
    <name type="ordered locus">PMM1451</name>
</gene>
<protein>
    <recommendedName>
        <fullName evidence="2">ATP synthase subunit alpha</fullName>
        <ecNumber evidence="2">7.1.2.2</ecNumber>
    </recommendedName>
    <alternativeName>
        <fullName evidence="2">ATP synthase F1 sector subunit alpha</fullName>
    </alternativeName>
    <alternativeName>
        <fullName evidence="2">F-ATPase subunit alpha</fullName>
    </alternativeName>
</protein>
<sequence length="505" mass="54340">MVSIRPDEISSILKQQITDYDQSVNVSNVGTVLQIGDGIARIYGLDQVMAGELLEFEDGTEGIALNLEDDNVGAVLMGEALGVQEGSNVKSTGKIASVPVGEAMKGRVVNPLGQPIDGKGEIPTSDNRLIEEMAPGIIKRRSVHEPMQTGITSIDAMIPVGRGQRELIIGDRQTGKTAIAIDTIINQKGQDVVCVYVAIGQKSASVANVVEVLREKGALEYTVVVSAGASEAAALQYLAPYTGAAIAEHFMYQGKATLVIYDDLTKQAQAYRQMSLLLRRPPGREAYPGDVFYCHSRLLERAAKLSDDMGGGSMTALPIIETQAGDVSAYIPTNVISITDGQIFLSADLFNSGLRPAINVGISVSRVGGAAQTKAIKKIAGTLKLELAQFDELAAFSQFASDLDEATQQQLERGKRLRELLKQAQFSPLNLAEQVAVVYAGVKGLIDEVPVEDVTKFAAELREYLKLNKAEFIEEILKEKKLNEGLETTLKEVIKEVKSSMLATV</sequence>
<organism>
    <name type="scientific">Prochlorococcus marinus subsp. pastoris (strain CCMP1986 / NIES-2087 / MED4)</name>
    <dbReference type="NCBI Taxonomy" id="59919"/>
    <lineage>
        <taxon>Bacteria</taxon>
        <taxon>Bacillati</taxon>
        <taxon>Cyanobacteriota</taxon>
        <taxon>Cyanophyceae</taxon>
        <taxon>Synechococcales</taxon>
        <taxon>Prochlorococcaceae</taxon>
        <taxon>Prochlorococcus</taxon>
    </lineage>
</organism>
<keyword id="KW-0066">ATP synthesis</keyword>
<keyword id="KW-0067">ATP-binding</keyword>
<keyword id="KW-0139">CF(1)</keyword>
<keyword id="KW-0375">Hydrogen ion transport</keyword>
<keyword id="KW-0406">Ion transport</keyword>
<keyword id="KW-0472">Membrane</keyword>
<keyword id="KW-0547">Nucleotide-binding</keyword>
<keyword id="KW-0793">Thylakoid</keyword>
<keyword id="KW-1278">Translocase</keyword>
<keyword id="KW-0813">Transport</keyword>
<name>ATPA_PROMP</name>
<evidence type="ECO:0000250" key="1"/>
<evidence type="ECO:0000255" key="2">
    <source>
        <dbReference type="HAMAP-Rule" id="MF_01346"/>
    </source>
</evidence>